<comment type="function">
    <text evidence="1">Required for 3'-end cleavage and polyadenylation of pre-mRNAs. Also involved in chromosome segregation where it has a role in chromosome attachment to the mitotic spindle (By similarity).</text>
</comment>
<comment type="subcellular location">
    <subcellularLocation>
        <location evidence="1">Nucleus</location>
    </subcellularLocation>
</comment>
<name>PFS2_EREGS</name>
<sequence length="449" mass="50628">MNSANDGSVKKYVSQRRTVDMSSPYDRLYFYKKHAIPLRTIQPESTYTADIMPPDAYRDHRRVLNIPTKFTHLSSNKVKHVIPAITWTPEGRRLVVATYSGEFSLWNGSSFNFESIMQAHDSAVTVMQYSHAGDWLISGDADGTIKIWQPNFNMVKVLDRAHTECMRDISFSYSDQKFVTCSDDNVLKIWNFSNGQQERVLSGHHWDVKSCDWHPKMGLIVSGSKDNLIKLWDPRTGRNVSTILGLKHTVIKTKFQPTQGNLLAVVSKDKSIKIYDMRQHMRELQTIRDDMDYMSLSWHPINETIFSVGCYNGAIKHFDLLHDNSNSTPACHTIPYAHEKSVTSLAYSPVGHILASAAKDRTIRFWARSRPVDPNAFDDPTYNNKKVNAWYFGINNNINAVRPKTEHGIALPPANETNLGTPQPSILGSESIAANNGNVPASGLPGLSF</sequence>
<keyword id="KW-0159">Chromosome partition</keyword>
<keyword id="KW-0507">mRNA processing</keyword>
<keyword id="KW-0539">Nucleus</keyword>
<keyword id="KW-1185">Reference proteome</keyword>
<keyword id="KW-0677">Repeat</keyword>
<keyword id="KW-0853">WD repeat</keyword>
<reference key="1">
    <citation type="journal article" date="2004" name="Science">
        <title>The Ashbya gossypii genome as a tool for mapping the ancient Saccharomyces cerevisiae genome.</title>
        <authorList>
            <person name="Dietrich F.S."/>
            <person name="Voegeli S."/>
            <person name="Brachat S."/>
            <person name="Lerch A."/>
            <person name="Gates K."/>
            <person name="Steiner S."/>
            <person name="Mohr C."/>
            <person name="Poehlmann R."/>
            <person name="Luedi P."/>
            <person name="Choi S."/>
            <person name="Wing R.A."/>
            <person name="Flavier A."/>
            <person name="Gaffney T.D."/>
            <person name="Philippsen P."/>
        </authorList>
    </citation>
    <scope>NUCLEOTIDE SEQUENCE [LARGE SCALE GENOMIC DNA]</scope>
    <source>
        <strain>ATCC 10895 / CBS 109.51 / FGSC 9923 / NRRL Y-1056</strain>
    </source>
</reference>
<reference key="2">
    <citation type="journal article" date="2013" name="G3 (Bethesda)">
        <title>Genomes of Ashbya fungi isolated from insects reveal four mating-type loci, numerous translocations, lack of transposons, and distinct gene duplications.</title>
        <authorList>
            <person name="Dietrich F.S."/>
            <person name="Voegeli S."/>
            <person name="Kuo S."/>
            <person name="Philippsen P."/>
        </authorList>
    </citation>
    <scope>GENOME REANNOTATION</scope>
    <source>
        <strain>ATCC 10895 / CBS 109.51 / FGSC 9923 / NRRL Y-1056</strain>
    </source>
</reference>
<proteinExistence type="inferred from homology"/>
<feature type="chain" id="PRO_0000238495" description="Polyadenylation factor subunit 2">
    <location>
        <begin position="1"/>
        <end position="449"/>
    </location>
</feature>
<feature type="repeat" description="WD 1">
    <location>
        <begin position="77"/>
        <end position="116"/>
    </location>
</feature>
<feature type="repeat" description="WD 2">
    <location>
        <begin position="119"/>
        <end position="158"/>
    </location>
</feature>
<feature type="repeat" description="WD 3">
    <location>
        <begin position="161"/>
        <end position="200"/>
    </location>
</feature>
<feature type="repeat" description="WD 4">
    <location>
        <begin position="203"/>
        <end position="242"/>
    </location>
</feature>
<feature type="repeat" description="WD 5">
    <location>
        <begin position="245"/>
        <end position="285"/>
    </location>
</feature>
<feature type="repeat" description="WD 6">
    <location>
        <begin position="288"/>
        <end position="328"/>
    </location>
</feature>
<feature type="repeat" description="WD 7">
    <location>
        <begin position="337"/>
        <end position="376"/>
    </location>
</feature>
<feature type="region of interest" description="Disordered" evidence="2">
    <location>
        <begin position="411"/>
        <end position="432"/>
    </location>
</feature>
<feature type="compositionally biased region" description="Polar residues" evidence="2">
    <location>
        <begin position="415"/>
        <end position="432"/>
    </location>
</feature>
<organism>
    <name type="scientific">Eremothecium gossypii (strain ATCC 10895 / CBS 109.51 / FGSC 9923 / NRRL Y-1056)</name>
    <name type="common">Yeast</name>
    <name type="synonym">Ashbya gossypii</name>
    <dbReference type="NCBI Taxonomy" id="284811"/>
    <lineage>
        <taxon>Eukaryota</taxon>
        <taxon>Fungi</taxon>
        <taxon>Dikarya</taxon>
        <taxon>Ascomycota</taxon>
        <taxon>Saccharomycotina</taxon>
        <taxon>Saccharomycetes</taxon>
        <taxon>Saccharomycetales</taxon>
        <taxon>Saccharomycetaceae</taxon>
        <taxon>Eremothecium</taxon>
    </lineage>
</organism>
<gene>
    <name type="primary">PSF2</name>
    <name type="ordered locus">ADL184W</name>
</gene>
<protein>
    <recommendedName>
        <fullName>Polyadenylation factor subunit 2</fullName>
    </recommendedName>
</protein>
<evidence type="ECO:0000250" key="1"/>
<evidence type="ECO:0000256" key="2">
    <source>
        <dbReference type="SAM" id="MobiDB-lite"/>
    </source>
</evidence>
<accession>Q75AV4</accession>
<dbReference type="EMBL" id="AE016817">
    <property type="protein sequence ID" value="AAS51736.1"/>
    <property type="molecule type" value="Genomic_DNA"/>
</dbReference>
<dbReference type="RefSeq" id="NP_983912.1">
    <property type="nucleotide sequence ID" value="NM_209265.1"/>
</dbReference>
<dbReference type="SMR" id="Q75AV4"/>
<dbReference type="FunCoup" id="Q75AV4">
    <property type="interactions" value="262"/>
</dbReference>
<dbReference type="STRING" id="284811.Q75AV4"/>
<dbReference type="EnsemblFungi" id="AAS51736">
    <property type="protein sequence ID" value="AAS51736"/>
    <property type="gene ID" value="AGOS_ADL184W"/>
</dbReference>
<dbReference type="GeneID" id="4620054"/>
<dbReference type="KEGG" id="ago:AGOS_ADL184W"/>
<dbReference type="eggNOG" id="KOG0284">
    <property type="taxonomic scope" value="Eukaryota"/>
</dbReference>
<dbReference type="HOGENOM" id="CLU_000288_77_0_1"/>
<dbReference type="InParanoid" id="Q75AV4"/>
<dbReference type="OMA" id="HHWDVKS"/>
<dbReference type="OrthoDB" id="16717at2759"/>
<dbReference type="Proteomes" id="UP000000591">
    <property type="component" value="Chromosome IV"/>
</dbReference>
<dbReference type="GO" id="GO:0000785">
    <property type="term" value="C:chromatin"/>
    <property type="evidence" value="ECO:0007669"/>
    <property type="project" value="EnsemblFungi"/>
</dbReference>
<dbReference type="GO" id="GO:0005847">
    <property type="term" value="C:mRNA cleavage and polyadenylation specificity factor complex"/>
    <property type="evidence" value="ECO:0000318"/>
    <property type="project" value="GO_Central"/>
</dbReference>
<dbReference type="GO" id="GO:0007059">
    <property type="term" value="P:chromosome segregation"/>
    <property type="evidence" value="ECO:0007669"/>
    <property type="project" value="UniProtKB-KW"/>
</dbReference>
<dbReference type="GO" id="GO:0180010">
    <property type="term" value="P:co-transcriptional mRNA 3'-end processing, cleavage and polyadenylation pathway"/>
    <property type="evidence" value="ECO:0007669"/>
    <property type="project" value="EnsemblFungi"/>
</dbReference>
<dbReference type="CDD" id="cd00200">
    <property type="entry name" value="WD40"/>
    <property type="match status" value="1"/>
</dbReference>
<dbReference type="FunFam" id="2.130.10.10:FF:002041">
    <property type="entry name" value="AaceriADL184Wp"/>
    <property type="match status" value="1"/>
</dbReference>
<dbReference type="FunFam" id="2.130.10.10:FF:001039">
    <property type="entry name" value="Polyadenylation factor subunit 2"/>
    <property type="match status" value="1"/>
</dbReference>
<dbReference type="Gene3D" id="2.130.10.10">
    <property type="entry name" value="YVTN repeat-like/Quinoprotein amine dehydrogenase"/>
    <property type="match status" value="2"/>
</dbReference>
<dbReference type="InterPro" id="IPR020472">
    <property type="entry name" value="G-protein_beta_WD-40_rep"/>
</dbReference>
<dbReference type="InterPro" id="IPR045245">
    <property type="entry name" value="Pfs2-like"/>
</dbReference>
<dbReference type="InterPro" id="IPR015943">
    <property type="entry name" value="WD40/YVTN_repeat-like_dom_sf"/>
</dbReference>
<dbReference type="InterPro" id="IPR036322">
    <property type="entry name" value="WD40_repeat_dom_sf"/>
</dbReference>
<dbReference type="InterPro" id="IPR001680">
    <property type="entry name" value="WD40_rpt"/>
</dbReference>
<dbReference type="PANTHER" id="PTHR22836:SF0">
    <property type="entry name" value="PRE-MRNA 3' END PROCESSING PROTEIN WDR33"/>
    <property type="match status" value="1"/>
</dbReference>
<dbReference type="PANTHER" id="PTHR22836">
    <property type="entry name" value="WD40 REPEAT PROTEIN"/>
    <property type="match status" value="1"/>
</dbReference>
<dbReference type="Pfam" id="PF00400">
    <property type="entry name" value="WD40"/>
    <property type="match status" value="4"/>
</dbReference>
<dbReference type="PRINTS" id="PR00320">
    <property type="entry name" value="GPROTEINBRPT"/>
</dbReference>
<dbReference type="SMART" id="SM00320">
    <property type="entry name" value="WD40"/>
    <property type="match status" value="7"/>
</dbReference>
<dbReference type="SUPFAM" id="SSF50978">
    <property type="entry name" value="WD40 repeat-like"/>
    <property type="match status" value="1"/>
</dbReference>
<dbReference type="PROSITE" id="PS50082">
    <property type="entry name" value="WD_REPEATS_2"/>
    <property type="match status" value="4"/>
</dbReference>
<dbReference type="PROSITE" id="PS50294">
    <property type="entry name" value="WD_REPEATS_REGION"/>
    <property type="match status" value="1"/>
</dbReference>